<comment type="function">
    <text evidence="1">Key component of the proton channel; it plays a direct role in the translocation of protons across the membrane.</text>
</comment>
<comment type="subunit">
    <text evidence="1">F-type ATPases have 2 components, CF(1) - the catalytic core - and CF(0) - the membrane proton channel. CF(1) has five subunits: alpha(3), beta(3), gamma(1), delta(1), epsilon(1). CF(0) has three main subunits: a(1), b(2) and c(9-12). The alpha and beta chains form an alternating ring which encloses part of the gamma chain. CF(1) is attached to CF(0) by a central stalk formed by the gamma and epsilon chains, while a peripheral stalk is formed by the delta and b chains.</text>
</comment>
<comment type="subcellular location">
    <subcellularLocation>
        <location evidence="1">Cell membrane</location>
        <topology evidence="1">Multi-pass membrane protein</topology>
    </subcellularLocation>
</comment>
<comment type="similarity">
    <text evidence="1">Belongs to the ATPase A chain family.</text>
</comment>
<protein>
    <recommendedName>
        <fullName evidence="1">ATP synthase subunit a</fullName>
    </recommendedName>
    <alternativeName>
        <fullName evidence="1">ATP synthase F0 sector subunit a</fullName>
    </alternativeName>
    <alternativeName>
        <fullName evidence="1">F-ATPase subunit 6</fullName>
    </alternativeName>
</protein>
<evidence type="ECO:0000255" key="1">
    <source>
        <dbReference type="HAMAP-Rule" id="MF_01393"/>
    </source>
</evidence>
<reference key="1">
    <citation type="journal article" date="2005" name="PLoS Biol.">
        <title>The Wolbachia genome of Brugia malayi: endosymbiont evolution within a human pathogenic nematode.</title>
        <authorList>
            <person name="Foster J."/>
            <person name="Ganatra M."/>
            <person name="Kamal I."/>
            <person name="Ware J."/>
            <person name="Makarova K."/>
            <person name="Ivanova N."/>
            <person name="Bhattacharyya A."/>
            <person name="Kapatral V."/>
            <person name="Kumar S."/>
            <person name="Posfai J."/>
            <person name="Vincze T."/>
            <person name="Ingram J."/>
            <person name="Moran L."/>
            <person name="Lapidus A."/>
            <person name="Omelchenko M."/>
            <person name="Kyrpides N."/>
            <person name="Ghedin E."/>
            <person name="Wang S."/>
            <person name="Goltsman E."/>
            <person name="Joukov V."/>
            <person name="Ostrovskaya O."/>
            <person name="Tsukerman K."/>
            <person name="Mazur M."/>
            <person name="Comb D."/>
            <person name="Koonin E."/>
            <person name="Slatko B."/>
        </authorList>
    </citation>
    <scope>NUCLEOTIDE SEQUENCE [LARGE SCALE GENOMIC DNA]</scope>
    <source>
        <strain>TRS</strain>
    </source>
</reference>
<keyword id="KW-0066">ATP synthesis</keyword>
<keyword id="KW-1003">Cell membrane</keyword>
<keyword id="KW-0138">CF(0)</keyword>
<keyword id="KW-0375">Hydrogen ion transport</keyword>
<keyword id="KW-0406">Ion transport</keyword>
<keyword id="KW-0472">Membrane</keyword>
<keyword id="KW-1185">Reference proteome</keyword>
<keyword id="KW-0812">Transmembrane</keyword>
<keyword id="KW-1133">Transmembrane helix</keyword>
<keyword id="KW-0813">Transport</keyword>
<organism>
    <name type="scientific">Wolbachia sp. subsp. Brugia malayi (strain TRS)</name>
    <dbReference type="NCBI Taxonomy" id="292805"/>
    <lineage>
        <taxon>Bacteria</taxon>
        <taxon>Pseudomonadati</taxon>
        <taxon>Pseudomonadota</taxon>
        <taxon>Alphaproteobacteria</taxon>
        <taxon>Rickettsiales</taxon>
        <taxon>Anaplasmataceae</taxon>
        <taxon>Wolbachieae</taxon>
        <taxon>Wolbachia</taxon>
    </lineage>
</organism>
<dbReference type="EMBL" id="AE017321">
    <property type="protein sequence ID" value="AAW71048.1"/>
    <property type="molecule type" value="Genomic_DNA"/>
</dbReference>
<dbReference type="RefSeq" id="WP_011256658.1">
    <property type="nucleotide sequence ID" value="NC_006833.1"/>
</dbReference>
<dbReference type="SMR" id="Q5GSH6"/>
<dbReference type="STRING" id="292805.Wbm0460"/>
<dbReference type="KEGG" id="wbm:Wbm0460"/>
<dbReference type="eggNOG" id="COG0356">
    <property type="taxonomic scope" value="Bacteria"/>
</dbReference>
<dbReference type="HOGENOM" id="CLU_041018_0_2_5"/>
<dbReference type="Proteomes" id="UP000000534">
    <property type="component" value="Chromosome"/>
</dbReference>
<dbReference type="GO" id="GO:0005886">
    <property type="term" value="C:plasma membrane"/>
    <property type="evidence" value="ECO:0007669"/>
    <property type="project" value="UniProtKB-SubCell"/>
</dbReference>
<dbReference type="GO" id="GO:0045259">
    <property type="term" value="C:proton-transporting ATP synthase complex"/>
    <property type="evidence" value="ECO:0007669"/>
    <property type="project" value="UniProtKB-KW"/>
</dbReference>
<dbReference type="GO" id="GO:0046933">
    <property type="term" value="F:proton-transporting ATP synthase activity, rotational mechanism"/>
    <property type="evidence" value="ECO:0007669"/>
    <property type="project" value="UniProtKB-UniRule"/>
</dbReference>
<dbReference type="CDD" id="cd00310">
    <property type="entry name" value="ATP-synt_Fo_a_6"/>
    <property type="match status" value="1"/>
</dbReference>
<dbReference type="Gene3D" id="1.20.120.220">
    <property type="entry name" value="ATP synthase, F0 complex, subunit A"/>
    <property type="match status" value="1"/>
</dbReference>
<dbReference type="HAMAP" id="MF_01393">
    <property type="entry name" value="ATP_synth_a_bact"/>
    <property type="match status" value="1"/>
</dbReference>
<dbReference type="InterPro" id="IPR000568">
    <property type="entry name" value="ATP_synth_F0_asu"/>
</dbReference>
<dbReference type="InterPro" id="IPR023011">
    <property type="entry name" value="ATP_synth_F0_asu_AS"/>
</dbReference>
<dbReference type="InterPro" id="IPR045083">
    <property type="entry name" value="ATP_synth_F0_asu_bact/mt"/>
</dbReference>
<dbReference type="InterPro" id="IPR035908">
    <property type="entry name" value="F0_ATP_A_sf"/>
</dbReference>
<dbReference type="NCBIfam" id="TIGR01131">
    <property type="entry name" value="ATP_synt_6_or_A"/>
    <property type="match status" value="1"/>
</dbReference>
<dbReference type="NCBIfam" id="NF004482">
    <property type="entry name" value="PRK05815.2-4"/>
    <property type="match status" value="1"/>
</dbReference>
<dbReference type="PANTHER" id="PTHR11410">
    <property type="entry name" value="ATP SYNTHASE SUBUNIT A"/>
    <property type="match status" value="1"/>
</dbReference>
<dbReference type="PANTHER" id="PTHR11410:SF0">
    <property type="entry name" value="ATP SYNTHASE SUBUNIT A"/>
    <property type="match status" value="1"/>
</dbReference>
<dbReference type="Pfam" id="PF00119">
    <property type="entry name" value="ATP-synt_A"/>
    <property type="match status" value="1"/>
</dbReference>
<dbReference type="PRINTS" id="PR00123">
    <property type="entry name" value="ATPASEA"/>
</dbReference>
<dbReference type="SUPFAM" id="SSF81336">
    <property type="entry name" value="F1F0 ATP synthase subunit A"/>
    <property type="match status" value="1"/>
</dbReference>
<dbReference type="PROSITE" id="PS00449">
    <property type="entry name" value="ATPASE_A"/>
    <property type="match status" value="1"/>
</dbReference>
<proteinExistence type="inferred from homology"/>
<gene>
    <name evidence="1" type="primary">atpB</name>
    <name type="ordered locus">Wbm0460</name>
</gene>
<feature type="chain" id="PRO_0000362509" description="ATP synthase subunit a">
    <location>
        <begin position="1"/>
        <end position="241"/>
    </location>
</feature>
<feature type="transmembrane region" description="Helical" evidence="1">
    <location>
        <begin position="29"/>
        <end position="49"/>
    </location>
</feature>
<feature type="transmembrane region" description="Helical" evidence="1">
    <location>
        <begin position="86"/>
        <end position="106"/>
    </location>
</feature>
<feature type="transmembrane region" description="Helical" evidence="1">
    <location>
        <begin position="114"/>
        <end position="134"/>
    </location>
</feature>
<feature type="transmembrane region" description="Helical" evidence="1">
    <location>
        <begin position="144"/>
        <end position="164"/>
    </location>
</feature>
<feature type="transmembrane region" description="Helical" evidence="1">
    <location>
        <begin position="177"/>
        <end position="197"/>
    </location>
</feature>
<feature type="transmembrane region" description="Helical" evidence="1">
    <location>
        <begin position="200"/>
        <end position="220"/>
    </location>
</feature>
<feature type="transmembrane region" description="Helical" evidence="1">
    <location>
        <begin position="221"/>
        <end position="241"/>
    </location>
</feature>
<sequence length="241" mass="26823">MALNPLEQFKIHTIVELPKLFGHDINFTNSSLFMMISVVSVILFLLLGVRKGAVIPGYLQAAVEYVYDFITSIIESNTGSKGLKHIPLVFTVFTFTLSCNLVGMLPYSFTVTSHVIVTFALSMIVFTYTTIVGFKEKGINFLRILLPEGIPSWLAPMMVFIKLFAYLARPISLSIRLAANMIAGHTIIKVVAGFIMNMHLILTPIPFLFIIALIGFEVFVAILQAYIFTILTCIYLSDAVK</sequence>
<accession>Q5GSH6</accession>
<name>ATP6_WOLTR</name>